<accession>Q74AZ3</accession>
<evidence type="ECO:0000255" key="1">
    <source>
        <dbReference type="HAMAP-Rule" id="MF_00500"/>
    </source>
</evidence>
<evidence type="ECO:0000305" key="2"/>
<name>RS20_GEOSL</name>
<dbReference type="EMBL" id="AE017180">
    <property type="protein sequence ID" value="AAR35582.1"/>
    <property type="molecule type" value="Genomic_DNA"/>
</dbReference>
<dbReference type="RefSeq" id="NP_953255.1">
    <property type="nucleotide sequence ID" value="NC_002939.5"/>
</dbReference>
<dbReference type="RefSeq" id="WP_010942846.1">
    <property type="nucleotide sequence ID" value="NC_002939.5"/>
</dbReference>
<dbReference type="SMR" id="Q74AZ3"/>
<dbReference type="FunCoup" id="Q74AZ3">
    <property type="interactions" value="566"/>
</dbReference>
<dbReference type="STRING" id="243231.GSU2206"/>
<dbReference type="EnsemblBacteria" id="AAR35582">
    <property type="protein sequence ID" value="AAR35582"/>
    <property type="gene ID" value="GSU2206"/>
</dbReference>
<dbReference type="KEGG" id="gsu:GSU2206"/>
<dbReference type="PATRIC" id="fig|243231.5.peg.2238"/>
<dbReference type="eggNOG" id="COG0268">
    <property type="taxonomic scope" value="Bacteria"/>
</dbReference>
<dbReference type="HOGENOM" id="CLU_160655_3_1_7"/>
<dbReference type="InParanoid" id="Q74AZ3"/>
<dbReference type="OrthoDB" id="9807974at2"/>
<dbReference type="Proteomes" id="UP000000577">
    <property type="component" value="Chromosome"/>
</dbReference>
<dbReference type="GO" id="GO:0005829">
    <property type="term" value="C:cytosol"/>
    <property type="evidence" value="ECO:0000318"/>
    <property type="project" value="GO_Central"/>
</dbReference>
<dbReference type="GO" id="GO:0015935">
    <property type="term" value="C:small ribosomal subunit"/>
    <property type="evidence" value="ECO:0000318"/>
    <property type="project" value="GO_Central"/>
</dbReference>
<dbReference type="GO" id="GO:0070181">
    <property type="term" value="F:small ribosomal subunit rRNA binding"/>
    <property type="evidence" value="ECO:0000318"/>
    <property type="project" value="GO_Central"/>
</dbReference>
<dbReference type="GO" id="GO:0003735">
    <property type="term" value="F:structural constituent of ribosome"/>
    <property type="evidence" value="ECO:0007669"/>
    <property type="project" value="InterPro"/>
</dbReference>
<dbReference type="GO" id="GO:0006412">
    <property type="term" value="P:translation"/>
    <property type="evidence" value="ECO:0007669"/>
    <property type="project" value="UniProtKB-UniRule"/>
</dbReference>
<dbReference type="FunFam" id="1.20.58.110:FF:000001">
    <property type="entry name" value="30S ribosomal protein S20"/>
    <property type="match status" value="1"/>
</dbReference>
<dbReference type="Gene3D" id="1.20.58.110">
    <property type="entry name" value="Ribosomal protein S20"/>
    <property type="match status" value="1"/>
</dbReference>
<dbReference type="HAMAP" id="MF_00500">
    <property type="entry name" value="Ribosomal_bS20"/>
    <property type="match status" value="1"/>
</dbReference>
<dbReference type="InterPro" id="IPR002583">
    <property type="entry name" value="Ribosomal_bS20"/>
</dbReference>
<dbReference type="InterPro" id="IPR036510">
    <property type="entry name" value="Ribosomal_bS20_sf"/>
</dbReference>
<dbReference type="NCBIfam" id="TIGR00029">
    <property type="entry name" value="S20"/>
    <property type="match status" value="1"/>
</dbReference>
<dbReference type="PANTHER" id="PTHR33398">
    <property type="entry name" value="30S RIBOSOMAL PROTEIN S20"/>
    <property type="match status" value="1"/>
</dbReference>
<dbReference type="PANTHER" id="PTHR33398:SF1">
    <property type="entry name" value="SMALL RIBOSOMAL SUBUNIT PROTEIN BS20C"/>
    <property type="match status" value="1"/>
</dbReference>
<dbReference type="Pfam" id="PF01649">
    <property type="entry name" value="Ribosomal_S20p"/>
    <property type="match status" value="1"/>
</dbReference>
<dbReference type="SUPFAM" id="SSF46992">
    <property type="entry name" value="Ribosomal protein S20"/>
    <property type="match status" value="1"/>
</dbReference>
<feature type="chain" id="PRO_0000167965" description="Small ribosomal subunit protein bS20">
    <location>
        <begin position="1"/>
        <end position="87"/>
    </location>
</feature>
<protein>
    <recommendedName>
        <fullName evidence="1">Small ribosomal subunit protein bS20</fullName>
    </recommendedName>
    <alternativeName>
        <fullName evidence="2">30S ribosomal protein S20</fullName>
    </alternativeName>
</protein>
<proteinExistence type="inferred from homology"/>
<comment type="function">
    <text evidence="1">Binds directly to 16S ribosomal RNA.</text>
</comment>
<comment type="similarity">
    <text evidence="1">Belongs to the bacterial ribosomal protein bS20 family.</text>
</comment>
<reference key="1">
    <citation type="journal article" date="2003" name="Science">
        <title>Genome of Geobacter sulfurreducens: metal reduction in subsurface environments.</title>
        <authorList>
            <person name="Methe B.A."/>
            <person name="Nelson K.E."/>
            <person name="Eisen J.A."/>
            <person name="Paulsen I.T."/>
            <person name="Nelson W.C."/>
            <person name="Heidelberg J.F."/>
            <person name="Wu D."/>
            <person name="Wu M."/>
            <person name="Ward N.L."/>
            <person name="Beanan M.J."/>
            <person name="Dodson R.J."/>
            <person name="Madupu R."/>
            <person name="Brinkac L.M."/>
            <person name="Daugherty S.C."/>
            <person name="DeBoy R.T."/>
            <person name="Durkin A.S."/>
            <person name="Gwinn M.L."/>
            <person name="Kolonay J.F."/>
            <person name="Sullivan S.A."/>
            <person name="Haft D.H."/>
            <person name="Selengut J."/>
            <person name="Davidsen T.M."/>
            <person name="Zafar N."/>
            <person name="White O."/>
            <person name="Tran B."/>
            <person name="Romero C."/>
            <person name="Forberger H.A."/>
            <person name="Weidman J.F."/>
            <person name="Khouri H.M."/>
            <person name="Feldblyum T.V."/>
            <person name="Utterback T.R."/>
            <person name="Van Aken S.E."/>
            <person name="Lovley D.R."/>
            <person name="Fraser C.M."/>
        </authorList>
    </citation>
    <scope>NUCLEOTIDE SEQUENCE [LARGE SCALE GENOMIC DNA]</scope>
    <source>
        <strain>ATCC 51573 / DSM 12127 / PCA</strain>
    </source>
</reference>
<sequence>MAHHKSALKRIKQNKKKYLRNKHIRSTLRTFIKRVREAVEAKNADQARQALLAAIPVIDKAASKGVIHASNASRNVSRLTKLVNTLG</sequence>
<keyword id="KW-1185">Reference proteome</keyword>
<keyword id="KW-0687">Ribonucleoprotein</keyword>
<keyword id="KW-0689">Ribosomal protein</keyword>
<keyword id="KW-0694">RNA-binding</keyword>
<keyword id="KW-0699">rRNA-binding</keyword>
<organism>
    <name type="scientific">Geobacter sulfurreducens (strain ATCC 51573 / DSM 12127 / PCA)</name>
    <dbReference type="NCBI Taxonomy" id="243231"/>
    <lineage>
        <taxon>Bacteria</taxon>
        <taxon>Pseudomonadati</taxon>
        <taxon>Thermodesulfobacteriota</taxon>
        <taxon>Desulfuromonadia</taxon>
        <taxon>Geobacterales</taxon>
        <taxon>Geobacteraceae</taxon>
        <taxon>Geobacter</taxon>
    </lineage>
</organism>
<gene>
    <name evidence="1" type="primary">rpsT</name>
    <name type="ordered locus">GSU2206</name>
</gene>